<protein>
    <recommendedName>
        <fullName evidence="1">Outer membrane protein A</fullName>
    </recommendedName>
    <alternativeName>
        <fullName evidence="1">Outer membrane porin A</fullName>
    </alternativeName>
    <alternativeName>
        <fullName evidence="3">Outer membrane protein 3A</fullName>
    </alternativeName>
</protein>
<keyword id="KW-0998">Cell outer membrane</keyword>
<keyword id="KW-1015">Disulfide bond</keyword>
<keyword id="KW-0406">Ion transport</keyword>
<keyword id="KW-0472">Membrane</keyword>
<keyword id="KW-0626">Porin</keyword>
<keyword id="KW-0677">Repeat</keyword>
<keyword id="KW-0812">Transmembrane</keyword>
<keyword id="KW-1134">Transmembrane beta strand</keyword>
<keyword id="KW-0813">Transport</keyword>
<proteinExistence type="inferred from homology"/>
<sequence length="243" mass="25972">LAAKLSYPIADDLDIYTRLGGMIWRADSKANYGRTGERLSNHDTGVSPLAAVGVEYALTKNWATRLDYQFVSNIGDAGTVGARPDNTMLSLGVSYRFGQDDVVAPAPAPAPAPVVETKLFTLKSDVLFNSAKSSLKPEGQQALDQLYTQLSSMDPKDGSVVVLGYTDPVGKDAANQKLSEARARSVVDYLVSKGIPADKISARGMGEADQVTDSCGYKNGRATKAQIECLAPNRRVEIEVKGI</sequence>
<reference key="1">
    <citation type="journal article" date="1991" name="J. Gen. Microbiol.">
        <title>Molecular and evolutionary relationships among enteric bacteria.</title>
        <authorList>
            <person name="Lawrence J.G."/>
            <person name="Ochman H."/>
            <person name="Hartl D.L."/>
        </authorList>
    </citation>
    <scope>NUCLEOTIDE SEQUENCE [GENOMIC DNA]</scope>
    <source>
        <strain>ATCC 33077 / DSM 4582 / JCM 1243 / NCTC 11214</strain>
    </source>
</reference>
<comment type="function">
    <text evidence="1">With TolR probably plays a role in maintaining the position of the peptidoglycan cell wall in the periplasm. Acts as a porin with low permeability that allows slow penetration of small solutes; an internal gate slows down solute passage.</text>
</comment>
<comment type="subunit">
    <text evidence="1">Monomer and homodimer.</text>
</comment>
<comment type="subcellular location">
    <subcellularLocation>
        <location evidence="1">Cell outer membrane</location>
        <topology evidence="1">Multi-pass membrane protein</topology>
    </subcellularLocation>
</comment>
<comment type="domain">
    <text evidence="1">The extracellular loops are most variable in sequence, and in some bacteria confer sensitivity to phage and/or colicins.</text>
</comment>
<comment type="similarity">
    <text evidence="4">Belongs to the outer membrane OOP (TC 1.B.6) superfamily. OmpA family.</text>
</comment>
<name>OMPA_SEROD</name>
<evidence type="ECO:0000250" key="1">
    <source>
        <dbReference type="UniProtKB" id="P0A910"/>
    </source>
</evidence>
<evidence type="ECO:0000255" key="2">
    <source>
        <dbReference type="PROSITE-ProRule" id="PRU00473"/>
    </source>
</evidence>
<evidence type="ECO:0000303" key="3">
    <source>
    </source>
</evidence>
<evidence type="ECO:0000305" key="4"/>
<gene>
    <name evidence="1" type="primary">ompA</name>
</gene>
<feature type="chain" id="PRO_0000196256" description="Outer membrane protein A">
    <location>
        <begin position="1" status="less than"/>
        <end position="243" status="greater than"/>
    </location>
</feature>
<feature type="transmembrane region" description="Beta stranded" evidence="1">
    <location>
        <begin position="1" status="less than"/>
        <end position="8"/>
    </location>
</feature>
<feature type="transmembrane region" description="Beta stranded" evidence="1">
    <location>
        <begin position="13"/>
        <end position="21"/>
    </location>
</feature>
<feature type="transmembrane region" description="Beta stranded" evidence="1">
    <location>
        <begin position="48"/>
        <end position="57"/>
    </location>
</feature>
<feature type="transmembrane region" description="Beta stranded" evidence="1">
    <location>
        <begin position="62"/>
        <end position="69"/>
    </location>
</feature>
<feature type="transmembrane region" description="Beta stranded" evidence="1">
    <location>
        <begin position="88"/>
        <end position="96"/>
    </location>
</feature>
<feature type="repeat" description="1">
    <location>
        <begin position="104"/>
        <end position="105"/>
    </location>
</feature>
<feature type="repeat" description="2">
    <location>
        <begin position="106"/>
        <end position="107"/>
    </location>
</feature>
<feature type="repeat" description="3">
    <location>
        <begin position="108"/>
        <end position="109"/>
    </location>
</feature>
<feature type="repeat" description="4">
    <location>
        <begin position="110"/>
        <end position="111"/>
    </location>
</feature>
<feature type="repeat" description="5">
    <location>
        <begin position="112"/>
        <end position="113"/>
    </location>
</feature>
<feature type="domain" description="OmpA-like" evidence="2">
    <location>
        <begin position="115"/>
        <end position="243" status="greater than"/>
    </location>
</feature>
<feature type="region of interest" description="5 X 2 AA tandem repeats of A-P">
    <location>
        <begin position="104"/>
        <end position="113"/>
    </location>
</feature>
<feature type="site" description="Part of salt bridge gating mechanism" evidence="1">
    <location>
        <position position="65"/>
    </location>
</feature>
<feature type="disulfide bond" evidence="1">
    <location>
        <begin position="215"/>
        <end position="229"/>
    </location>
</feature>
<feature type="non-terminal residue">
    <location>
        <position position="1"/>
    </location>
</feature>
<feature type="non-terminal residue">
    <location>
        <position position="243"/>
    </location>
</feature>
<dbReference type="EMBL" id="M63357">
    <property type="protein sequence ID" value="AAA26561.1"/>
    <property type="molecule type" value="Genomic_DNA"/>
</dbReference>
<dbReference type="SMR" id="P24755"/>
<dbReference type="GO" id="GO:0009279">
    <property type="term" value="C:cell outer membrane"/>
    <property type="evidence" value="ECO:0007669"/>
    <property type="project" value="UniProtKB-SubCell"/>
</dbReference>
<dbReference type="GO" id="GO:0046930">
    <property type="term" value="C:pore complex"/>
    <property type="evidence" value="ECO:0007669"/>
    <property type="project" value="UniProtKB-KW"/>
</dbReference>
<dbReference type="GO" id="GO:0015288">
    <property type="term" value="F:porin activity"/>
    <property type="evidence" value="ECO:0007669"/>
    <property type="project" value="UniProtKB-KW"/>
</dbReference>
<dbReference type="GO" id="GO:0006811">
    <property type="term" value="P:monoatomic ion transport"/>
    <property type="evidence" value="ECO:0007669"/>
    <property type="project" value="UniProtKB-KW"/>
</dbReference>
<dbReference type="CDD" id="cd07185">
    <property type="entry name" value="OmpA_C-like"/>
    <property type="match status" value="1"/>
</dbReference>
<dbReference type="FunFam" id="3.30.1330.60:FF:000004">
    <property type="entry name" value="Outer membrane protein A"/>
    <property type="match status" value="1"/>
</dbReference>
<dbReference type="Gene3D" id="2.40.160.20">
    <property type="match status" value="1"/>
</dbReference>
<dbReference type="Gene3D" id="3.30.1330.60">
    <property type="entry name" value="OmpA-like domain"/>
    <property type="match status" value="1"/>
</dbReference>
<dbReference type="InterPro" id="IPR050330">
    <property type="entry name" value="Bact_OuterMem_StrucFunc"/>
</dbReference>
<dbReference type="InterPro" id="IPR011250">
    <property type="entry name" value="OMP/PagP_b-brl"/>
</dbReference>
<dbReference type="InterPro" id="IPR006664">
    <property type="entry name" value="OMP_bac"/>
</dbReference>
<dbReference type="InterPro" id="IPR002368">
    <property type="entry name" value="OmpA"/>
</dbReference>
<dbReference type="InterPro" id="IPR006665">
    <property type="entry name" value="OmpA-like"/>
</dbReference>
<dbReference type="InterPro" id="IPR006690">
    <property type="entry name" value="OMPA-like_CS"/>
</dbReference>
<dbReference type="InterPro" id="IPR036737">
    <property type="entry name" value="OmpA-like_sf"/>
</dbReference>
<dbReference type="InterPro" id="IPR000498">
    <property type="entry name" value="OmpA-like_TM_dom"/>
</dbReference>
<dbReference type="NCBIfam" id="NF008071">
    <property type="entry name" value="PRK10808.1"/>
    <property type="match status" value="1"/>
</dbReference>
<dbReference type="PANTHER" id="PTHR30329:SF21">
    <property type="entry name" value="LIPOPROTEIN YIAD-RELATED"/>
    <property type="match status" value="1"/>
</dbReference>
<dbReference type="PANTHER" id="PTHR30329">
    <property type="entry name" value="STATOR ELEMENT OF FLAGELLAR MOTOR COMPLEX"/>
    <property type="match status" value="1"/>
</dbReference>
<dbReference type="Pfam" id="PF00691">
    <property type="entry name" value="OmpA"/>
    <property type="match status" value="1"/>
</dbReference>
<dbReference type="Pfam" id="PF01389">
    <property type="entry name" value="OmpA_membrane"/>
    <property type="match status" value="1"/>
</dbReference>
<dbReference type="PRINTS" id="PR01021">
    <property type="entry name" value="OMPADOMAIN"/>
</dbReference>
<dbReference type="PRINTS" id="PR01022">
    <property type="entry name" value="OUTRMMBRANEA"/>
</dbReference>
<dbReference type="SUPFAM" id="SSF56925">
    <property type="entry name" value="OMPA-like"/>
    <property type="match status" value="1"/>
</dbReference>
<dbReference type="SUPFAM" id="SSF103088">
    <property type="entry name" value="OmpA-like"/>
    <property type="match status" value="1"/>
</dbReference>
<dbReference type="PROSITE" id="PS01068">
    <property type="entry name" value="OMPA_1"/>
    <property type="match status" value="1"/>
</dbReference>
<dbReference type="PROSITE" id="PS51123">
    <property type="entry name" value="OMPA_2"/>
    <property type="match status" value="1"/>
</dbReference>
<organism>
    <name type="scientific">Serratia odorifera</name>
    <dbReference type="NCBI Taxonomy" id="618"/>
    <lineage>
        <taxon>Bacteria</taxon>
        <taxon>Pseudomonadati</taxon>
        <taxon>Pseudomonadota</taxon>
        <taxon>Gammaproteobacteria</taxon>
        <taxon>Enterobacterales</taxon>
        <taxon>Yersiniaceae</taxon>
        <taxon>Serratia</taxon>
    </lineage>
</organism>
<accession>P24755</accession>